<feature type="chain" id="PRO_1000190429" description="Integration host factor subunit alpha">
    <location>
        <begin position="1"/>
        <end position="98"/>
    </location>
</feature>
<feature type="region of interest" description="Disordered" evidence="2">
    <location>
        <begin position="49"/>
        <end position="70"/>
    </location>
</feature>
<protein>
    <recommendedName>
        <fullName evidence="1">Integration host factor subunit alpha</fullName>
        <shortName evidence="1">IHF-alpha</shortName>
    </recommendedName>
</protein>
<reference key="1">
    <citation type="submission" date="2008-12" db="EMBL/GenBank/DDBJ databases">
        <title>Complete sequence of chromosome of Shewanella baltica OS223.</title>
        <authorList>
            <consortium name="US DOE Joint Genome Institute"/>
            <person name="Lucas S."/>
            <person name="Copeland A."/>
            <person name="Lapidus A."/>
            <person name="Glavina del Rio T."/>
            <person name="Dalin E."/>
            <person name="Tice H."/>
            <person name="Bruce D."/>
            <person name="Goodwin L."/>
            <person name="Pitluck S."/>
            <person name="Chertkov O."/>
            <person name="Meincke L."/>
            <person name="Brettin T."/>
            <person name="Detter J.C."/>
            <person name="Han C."/>
            <person name="Kuske C.R."/>
            <person name="Larimer F."/>
            <person name="Land M."/>
            <person name="Hauser L."/>
            <person name="Kyrpides N."/>
            <person name="Ovchinnikova G."/>
            <person name="Brettar I."/>
            <person name="Rodrigues J."/>
            <person name="Konstantinidis K."/>
            <person name="Tiedje J."/>
        </authorList>
    </citation>
    <scope>NUCLEOTIDE SEQUENCE [LARGE SCALE GENOMIC DNA]</scope>
    <source>
        <strain>OS223</strain>
    </source>
</reference>
<evidence type="ECO:0000255" key="1">
    <source>
        <dbReference type="HAMAP-Rule" id="MF_00380"/>
    </source>
</evidence>
<evidence type="ECO:0000256" key="2">
    <source>
        <dbReference type="SAM" id="MobiDB-lite"/>
    </source>
</evidence>
<accession>B8E7F3</accession>
<gene>
    <name evidence="1" type="primary">ihfA</name>
    <name evidence="1" type="synonym">himA</name>
    <name type="ordered locus">Sbal223_2417</name>
</gene>
<proteinExistence type="inferred from homology"/>
<sequence>MALTKAEMAEHLFETLGMNKRVAKEMVESFFEEIRGALESGEQVKLSGFGNFDLRDKNQRPGRNPKTGEDIPISARRVVTFRPGQKLKTRVEAANTGK</sequence>
<comment type="function">
    <text evidence="1">This protein is one of the two subunits of integration host factor, a specific DNA-binding protein that functions in genetic recombination as well as in transcriptional and translational control.</text>
</comment>
<comment type="subunit">
    <text evidence="1">Heterodimer of an alpha and a beta chain.</text>
</comment>
<comment type="similarity">
    <text evidence="1">Belongs to the bacterial histone-like protein family.</text>
</comment>
<keyword id="KW-0233">DNA recombination</keyword>
<keyword id="KW-0238">DNA-binding</keyword>
<keyword id="KW-0804">Transcription</keyword>
<keyword id="KW-0805">Transcription regulation</keyword>
<keyword id="KW-0810">Translation regulation</keyword>
<organism>
    <name type="scientific">Shewanella baltica (strain OS223)</name>
    <dbReference type="NCBI Taxonomy" id="407976"/>
    <lineage>
        <taxon>Bacteria</taxon>
        <taxon>Pseudomonadati</taxon>
        <taxon>Pseudomonadota</taxon>
        <taxon>Gammaproteobacteria</taxon>
        <taxon>Alteromonadales</taxon>
        <taxon>Shewanellaceae</taxon>
        <taxon>Shewanella</taxon>
    </lineage>
</organism>
<dbReference type="EMBL" id="CP001252">
    <property type="protein sequence ID" value="ACK46912.1"/>
    <property type="molecule type" value="Genomic_DNA"/>
</dbReference>
<dbReference type="RefSeq" id="WP_006081370.1">
    <property type="nucleotide sequence ID" value="NC_011663.1"/>
</dbReference>
<dbReference type="SMR" id="B8E7F3"/>
<dbReference type="GeneID" id="67443386"/>
<dbReference type="KEGG" id="sbp:Sbal223_2417"/>
<dbReference type="HOGENOM" id="CLU_105066_1_3_6"/>
<dbReference type="Proteomes" id="UP000002507">
    <property type="component" value="Chromosome"/>
</dbReference>
<dbReference type="GO" id="GO:0005829">
    <property type="term" value="C:cytosol"/>
    <property type="evidence" value="ECO:0007669"/>
    <property type="project" value="TreeGrafter"/>
</dbReference>
<dbReference type="GO" id="GO:0003677">
    <property type="term" value="F:DNA binding"/>
    <property type="evidence" value="ECO:0007669"/>
    <property type="project" value="UniProtKB-UniRule"/>
</dbReference>
<dbReference type="GO" id="GO:0030527">
    <property type="term" value="F:structural constituent of chromatin"/>
    <property type="evidence" value="ECO:0007669"/>
    <property type="project" value="InterPro"/>
</dbReference>
<dbReference type="GO" id="GO:0006310">
    <property type="term" value="P:DNA recombination"/>
    <property type="evidence" value="ECO:0007669"/>
    <property type="project" value="UniProtKB-UniRule"/>
</dbReference>
<dbReference type="GO" id="GO:0009893">
    <property type="term" value="P:positive regulation of metabolic process"/>
    <property type="evidence" value="ECO:0007669"/>
    <property type="project" value="UniProtKB-ARBA"/>
</dbReference>
<dbReference type="GO" id="GO:0006355">
    <property type="term" value="P:regulation of DNA-templated transcription"/>
    <property type="evidence" value="ECO:0007669"/>
    <property type="project" value="UniProtKB-UniRule"/>
</dbReference>
<dbReference type="GO" id="GO:0006417">
    <property type="term" value="P:regulation of translation"/>
    <property type="evidence" value="ECO:0007669"/>
    <property type="project" value="UniProtKB-UniRule"/>
</dbReference>
<dbReference type="CDD" id="cd13835">
    <property type="entry name" value="IHF_A"/>
    <property type="match status" value="1"/>
</dbReference>
<dbReference type="FunFam" id="4.10.520.10:FF:000002">
    <property type="entry name" value="Integration host factor subunit alpha"/>
    <property type="match status" value="1"/>
</dbReference>
<dbReference type="Gene3D" id="4.10.520.10">
    <property type="entry name" value="IHF-like DNA-binding proteins"/>
    <property type="match status" value="1"/>
</dbReference>
<dbReference type="HAMAP" id="MF_00380">
    <property type="entry name" value="IHF_alpha"/>
    <property type="match status" value="1"/>
</dbReference>
<dbReference type="InterPro" id="IPR000119">
    <property type="entry name" value="Hist_DNA-bd"/>
</dbReference>
<dbReference type="InterPro" id="IPR020816">
    <property type="entry name" value="Histone-like_DNA-bd_CS"/>
</dbReference>
<dbReference type="InterPro" id="IPR010992">
    <property type="entry name" value="IHF-like_DNA-bd_dom_sf"/>
</dbReference>
<dbReference type="InterPro" id="IPR005684">
    <property type="entry name" value="IHF_alpha"/>
</dbReference>
<dbReference type="NCBIfam" id="TIGR00987">
    <property type="entry name" value="himA"/>
    <property type="match status" value="1"/>
</dbReference>
<dbReference type="NCBIfam" id="NF001401">
    <property type="entry name" value="PRK00285.1"/>
    <property type="match status" value="1"/>
</dbReference>
<dbReference type="PANTHER" id="PTHR33175">
    <property type="entry name" value="DNA-BINDING PROTEIN HU"/>
    <property type="match status" value="1"/>
</dbReference>
<dbReference type="PANTHER" id="PTHR33175:SF2">
    <property type="entry name" value="INTEGRATION HOST FACTOR SUBUNIT ALPHA"/>
    <property type="match status" value="1"/>
</dbReference>
<dbReference type="Pfam" id="PF00216">
    <property type="entry name" value="Bac_DNA_binding"/>
    <property type="match status" value="1"/>
</dbReference>
<dbReference type="PRINTS" id="PR01727">
    <property type="entry name" value="DNABINDINGHU"/>
</dbReference>
<dbReference type="SMART" id="SM00411">
    <property type="entry name" value="BHL"/>
    <property type="match status" value="1"/>
</dbReference>
<dbReference type="SUPFAM" id="SSF47729">
    <property type="entry name" value="IHF-like DNA-binding proteins"/>
    <property type="match status" value="1"/>
</dbReference>
<dbReference type="PROSITE" id="PS00045">
    <property type="entry name" value="HISTONE_LIKE"/>
    <property type="match status" value="1"/>
</dbReference>
<name>IHFA_SHEB2</name>